<organism>
    <name type="scientific">Clostridium novyi (strain NT)</name>
    <dbReference type="NCBI Taxonomy" id="386415"/>
    <lineage>
        <taxon>Bacteria</taxon>
        <taxon>Bacillati</taxon>
        <taxon>Bacillota</taxon>
        <taxon>Clostridia</taxon>
        <taxon>Eubacteriales</taxon>
        <taxon>Clostridiaceae</taxon>
        <taxon>Clostridium</taxon>
    </lineage>
</organism>
<name>APEB_CLONN</name>
<sequence length="433" mass="48293">MKNKIKFANELLDFIYKSPTAFHAVDTIKKVLNKEGFSELKECEKWNIEKGKKYYMTKNDSAIVAFVVGNGEVHEDGFKIIGAHTDSPTFRIKPNPEMTSEQSYIKLNTEVYGGPILNTWIDRPLAVAGRVTLKGENILFPETKLVNINKPIMIIPNLAIHMNRNINQGIELNRQVDTLPILGLINDKFEKNDYLLKAIAKELDVDYKEIIDFDLFLYEYEKGSIIGIENEFVSSGRLDDLEAVHAALEGLTQSNVSKATNVLVCFDNEEVGSSTKQGADSNMLANVLERIVISLNGDREDFFRALSKSFIISSDSAHAVHPNKGEKCDPTNRPKLNKGPAIKIAASQSYTSDSNSSSVFKALCSKADVPVQEFVNRSDERGGSTIGPISSTHLNIRSVDIGTPLLAMHSIRELCGVDDHYYGMKVFKEFYNL</sequence>
<evidence type="ECO:0000255" key="1">
    <source>
        <dbReference type="HAMAP-Rule" id="MF_00467"/>
    </source>
</evidence>
<protein>
    <recommendedName>
        <fullName evidence="1">Probable M18 family aminopeptidase 2</fullName>
        <ecNumber evidence="1">3.4.11.-</ecNumber>
    </recommendedName>
</protein>
<proteinExistence type="inferred from homology"/>
<comment type="cofactor">
    <cofactor evidence="1">
        <name>Zn(2+)</name>
        <dbReference type="ChEBI" id="CHEBI:29105"/>
    </cofactor>
</comment>
<comment type="similarity">
    <text evidence="1">Belongs to the peptidase M18 family.</text>
</comment>
<keyword id="KW-0031">Aminopeptidase</keyword>
<keyword id="KW-0378">Hydrolase</keyword>
<keyword id="KW-0479">Metal-binding</keyword>
<keyword id="KW-0482">Metalloprotease</keyword>
<keyword id="KW-0645">Protease</keyword>
<keyword id="KW-1185">Reference proteome</keyword>
<keyword id="KW-0862">Zinc</keyword>
<gene>
    <name evidence="1" type="primary">apeB</name>
    <name type="ordered locus">NT01CX_1346</name>
</gene>
<reference key="1">
    <citation type="journal article" date="2006" name="Nat. Biotechnol.">
        <title>The genome and transcriptomes of the anti-tumor agent Clostridium novyi-NT.</title>
        <authorList>
            <person name="Bettegowda C."/>
            <person name="Huang X."/>
            <person name="Lin J."/>
            <person name="Cheong I."/>
            <person name="Kohli M."/>
            <person name="Szabo S.A."/>
            <person name="Zhang X."/>
            <person name="Diaz L.A. Jr."/>
            <person name="Velculescu V.E."/>
            <person name="Parmigiani G."/>
            <person name="Kinzler K.W."/>
            <person name="Vogelstein B."/>
            <person name="Zhou S."/>
        </authorList>
    </citation>
    <scope>NUCLEOTIDE SEQUENCE [LARGE SCALE GENOMIC DNA]</scope>
    <source>
        <strain>NT</strain>
    </source>
</reference>
<feature type="chain" id="PRO_1000013697" description="Probable M18 family aminopeptidase 2">
    <location>
        <begin position="1"/>
        <end position="433"/>
    </location>
</feature>
<feature type="binding site" evidence="1">
    <location>
        <position position="84"/>
    </location>
    <ligand>
        <name>Zn(2+)</name>
        <dbReference type="ChEBI" id="CHEBI:29105"/>
    </ligand>
</feature>
<feature type="binding site" evidence="1">
    <location>
        <position position="161"/>
    </location>
    <ligand>
        <name>Zn(2+)</name>
        <dbReference type="ChEBI" id="CHEBI:29105"/>
    </ligand>
</feature>
<feature type="binding site" evidence="1">
    <location>
        <position position="409"/>
    </location>
    <ligand>
        <name>Zn(2+)</name>
        <dbReference type="ChEBI" id="CHEBI:29105"/>
    </ligand>
</feature>
<accession>A0PYH7</accession>
<dbReference type="EC" id="3.4.11.-" evidence="1"/>
<dbReference type="EMBL" id="CP000382">
    <property type="protein sequence ID" value="ABK61088.1"/>
    <property type="molecule type" value="Genomic_DNA"/>
</dbReference>
<dbReference type="RefSeq" id="WP_011721437.1">
    <property type="nucleotide sequence ID" value="NC_008593.1"/>
</dbReference>
<dbReference type="SMR" id="A0PYH7"/>
<dbReference type="STRING" id="386415.NT01CX_1346"/>
<dbReference type="KEGG" id="cno:NT01CX_1346"/>
<dbReference type="PATRIC" id="fig|386415.7.peg.454"/>
<dbReference type="eggNOG" id="COG1362">
    <property type="taxonomic scope" value="Bacteria"/>
</dbReference>
<dbReference type="HOGENOM" id="CLU_019532_2_0_9"/>
<dbReference type="Proteomes" id="UP000008220">
    <property type="component" value="Chromosome"/>
</dbReference>
<dbReference type="GO" id="GO:0005737">
    <property type="term" value="C:cytoplasm"/>
    <property type="evidence" value="ECO:0007669"/>
    <property type="project" value="UniProtKB-ARBA"/>
</dbReference>
<dbReference type="GO" id="GO:0004177">
    <property type="term" value="F:aminopeptidase activity"/>
    <property type="evidence" value="ECO:0007669"/>
    <property type="project" value="UniProtKB-UniRule"/>
</dbReference>
<dbReference type="GO" id="GO:0008237">
    <property type="term" value="F:metallopeptidase activity"/>
    <property type="evidence" value="ECO:0007669"/>
    <property type="project" value="UniProtKB-UniRule"/>
</dbReference>
<dbReference type="GO" id="GO:0008270">
    <property type="term" value="F:zinc ion binding"/>
    <property type="evidence" value="ECO:0007669"/>
    <property type="project" value="UniProtKB-UniRule"/>
</dbReference>
<dbReference type="GO" id="GO:0006508">
    <property type="term" value="P:proteolysis"/>
    <property type="evidence" value="ECO:0007669"/>
    <property type="project" value="UniProtKB-UniRule"/>
</dbReference>
<dbReference type="CDD" id="cd05658">
    <property type="entry name" value="M18_DAP"/>
    <property type="match status" value="1"/>
</dbReference>
<dbReference type="FunFam" id="2.30.250.10:FF:000003">
    <property type="entry name" value="Probable M18 family aminopeptidase 2"/>
    <property type="match status" value="1"/>
</dbReference>
<dbReference type="Gene3D" id="2.30.250.10">
    <property type="entry name" value="Aminopeptidase i, Domain 2"/>
    <property type="match status" value="1"/>
</dbReference>
<dbReference type="Gene3D" id="3.40.630.10">
    <property type="entry name" value="Zn peptidases"/>
    <property type="match status" value="1"/>
</dbReference>
<dbReference type="HAMAP" id="MF_00467">
    <property type="entry name" value="Aminopeptidase_M18_2"/>
    <property type="match status" value="1"/>
</dbReference>
<dbReference type="InterPro" id="IPR022984">
    <property type="entry name" value="M18_aminopeptidase_2"/>
</dbReference>
<dbReference type="InterPro" id="IPR001948">
    <property type="entry name" value="Peptidase_M18"/>
</dbReference>
<dbReference type="InterPro" id="IPR023358">
    <property type="entry name" value="Peptidase_M18_dom2"/>
</dbReference>
<dbReference type="NCBIfam" id="NF002759">
    <property type="entry name" value="PRK02813.1"/>
    <property type="match status" value="1"/>
</dbReference>
<dbReference type="PANTHER" id="PTHR28570">
    <property type="entry name" value="ASPARTYL AMINOPEPTIDASE"/>
    <property type="match status" value="1"/>
</dbReference>
<dbReference type="PANTHER" id="PTHR28570:SF3">
    <property type="entry name" value="ASPARTYL AMINOPEPTIDASE"/>
    <property type="match status" value="1"/>
</dbReference>
<dbReference type="Pfam" id="PF02127">
    <property type="entry name" value="Peptidase_M18"/>
    <property type="match status" value="1"/>
</dbReference>
<dbReference type="PRINTS" id="PR00932">
    <property type="entry name" value="AMINO1PTASE"/>
</dbReference>
<dbReference type="SUPFAM" id="SSF101821">
    <property type="entry name" value="Aminopeptidase/glucanase lid domain"/>
    <property type="match status" value="1"/>
</dbReference>
<dbReference type="SUPFAM" id="SSF53187">
    <property type="entry name" value="Zn-dependent exopeptidases"/>
    <property type="match status" value="1"/>
</dbReference>